<feature type="chain" id="PRO_0000086111" description="cAMP-dependent protein kinase catalytic subunit 2">
    <location>
        <begin position="1"/>
        <end position="354"/>
    </location>
</feature>
<feature type="domain" description="Protein kinase" evidence="1">
    <location>
        <begin position="45"/>
        <end position="301"/>
    </location>
</feature>
<feature type="domain" description="AGC-kinase C-terminal" evidence="2">
    <location>
        <begin position="302"/>
        <end position="354"/>
    </location>
</feature>
<feature type="active site" description="Proton acceptor" evidence="1 3">
    <location>
        <position position="168"/>
    </location>
</feature>
<feature type="binding site" evidence="1">
    <location>
        <begin position="51"/>
        <end position="59"/>
    </location>
    <ligand>
        <name>ATP</name>
        <dbReference type="ChEBI" id="CHEBI:30616"/>
    </ligand>
</feature>
<feature type="binding site" evidence="1">
    <location>
        <position position="74"/>
    </location>
    <ligand>
        <name>ATP</name>
        <dbReference type="ChEBI" id="CHEBI:30616"/>
    </ligand>
</feature>
<keyword id="KW-0067">ATP-binding</keyword>
<keyword id="KW-0418">Kinase</keyword>
<keyword id="KW-0547">Nucleotide-binding</keyword>
<keyword id="KW-1185">Reference proteome</keyword>
<keyword id="KW-0723">Serine/threonine-protein kinase</keyword>
<keyword id="KW-0808">Transferase</keyword>
<accession>P16911</accession>
<accession>P16910</accession>
<accession>Q53XD8</accession>
<accession>Q8IMH7</accession>
<gene>
    <name type="primary">Pka-C2</name>
    <name type="synonym">DC1</name>
    <name type="ORF">CG12066</name>
</gene>
<name>KAPC2_DROME</name>
<organism>
    <name type="scientific">Drosophila melanogaster</name>
    <name type="common">Fruit fly</name>
    <dbReference type="NCBI Taxonomy" id="7227"/>
    <lineage>
        <taxon>Eukaryota</taxon>
        <taxon>Metazoa</taxon>
        <taxon>Ecdysozoa</taxon>
        <taxon>Arthropoda</taxon>
        <taxon>Hexapoda</taxon>
        <taxon>Insecta</taxon>
        <taxon>Pterygota</taxon>
        <taxon>Neoptera</taxon>
        <taxon>Endopterygota</taxon>
        <taxon>Diptera</taxon>
        <taxon>Brachycera</taxon>
        <taxon>Muscomorpha</taxon>
        <taxon>Ephydroidea</taxon>
        <taxon>Drosophilidae</taxon>
        <taxon>Drosophila</taxon>
        <taxon>Sophophora</taxon>
    </lineage>
</organism>
<proteinExistence type="evidence at transcript level"/>
<dbReference type="EC" id="2.7.11.1"/>
<dbReference type="EMBL" id="X16960">
    <property type="protein sequence ID" value="CAA34833.1"/>
    <property type="molecule type" value="Genomic_DNA"/>
</dbReference>
<dbReference type="EMBL" id="X16960">
    <property type="protein sequence ID" value="CAA34834.1"/>
    <property type="status" value="ALT_SEQ"/>
    <property type="molecule type" value="Genomic_DNA"/>
</dbReference>
<dbReference type="EMBL" id="AE014297">
    <property type="protein sequence ID" value="AAN14254.2"/>
    <property type="molecule type" value="Genomic_DNA"/>
</dbReference>
<dbReference type="EMBL" id="BT012339">
    <property type="protein sequence ID" value="AAS77464.1"/>
    <property type="molecule type" value="mRNA"/>
</dbReference>
<dbReference type="PIR" id="D31751">
    <property type="entry name" value="D31751"/>
</dbReference>
<dbReference type="RefSeq" id="NP_733397.2">
    <property type="nucleotide sequence ID" value="NM_170518.4"/>
</dbReference>
<dbReference type="SMR" id="P16911"/>
<dbReference type="BioGRID" id="68495">
    <property type="interactions" value="1"/>
</dbReference>
<dbReference type="FunCoup" id="P16911">
    <property type="interactions" value="213"/>
</dbReference>
<dbReference type="STRING" id="7227.FBpp0085089"/>
<dbReference type="PaxDb" id="7227-FBpp0085089"/>
<dbReference type="DNASU" id="43644"/>
<dbReference type="EnsemblMetazoa" id="FBtr0085727">
    <property type="protein sequence ID" value="FBpp0085089"/>
    <property type="gene ID" value="FBgn0000274"/>
</dbReference>
<dbReference type="GeneID" id="43644"/>
<dbReference type="KEGG" id="dme:Dmel_CG12066"/>
<dbReference type="AGR" id="FB:FBgn0000274"/>
<dbReference type="CTD" id="43644"/>
<dbReference type="FlyBase" id="FBgn0000274">
    <property type="gene designation" value="Pka-C2"/>
</dbReference>
<dbReference type="VEuPathDB" id="VectorBase:FBgn0000274"/>
<dbReference type="eggNOG" id="KOG0616">
    <property type="taxonomic scope" value="Eukaryota"/>
</dbReference>
<dbReference type="GeneTree" id="ENSGT00940000172108"/>
<dbReference type="InParanoid" id="P16911"/>
<dbReference type="OMA" id="KINRHPE"/>
<dbReference type="OrthoDB" id="63267at2759"/>
<dbReference type="PhylomeDB" id="P16911"/>
<dbReference type="BRENDA" id="2.7.11.1">
    <property type="organism ID" value="1994"/>
</dbReference>
<dbReference type="Reactome" id="R-DME-163615">
    <property type="pathway name" value="PKA activation"/>
</dbReference>
<dbReference type="Reactome" id="R-DME-164378">
    <property type="pathway name" value="PKA activation in glucagon signalling"/>
</dbReference>
<dbReference type="Reactome" id="R-DME-180024">
    <property type="pathway name" value="DARPP-32 events"/>
</dbReference>
<dbReference type="Reactome" id="R-DME-381676">
    <property type="pathway name" value="Glucagon-like Peptide-1 (GLP1) regulates insulin secretion"/>
</dbReference>
<dbReference type="Reactome" id="R-DME-392517">
    <property type="pathway name" value="Rap1 signalling"/>
</dbReference>
<dbReference type="Reactome" id="R-DME-422356">
    <property type="pathway name" value="Regulation of insulin secretion"/>
</dbReference>
<dbReference type="Reactome" id="R-DME-432040">
    <property type="pathway name" value="Vasopressin regulates renal water homeostasis via Aquaporins"/>
</dbReference>
<dbReference type="Reactome" id="R-DME-4420097">
    <property type="pathway name" value="VEGFA-VEGFR2 Pathway"/>
</dbReference>
<dbReference type="Reactome" id="R-DME-442720">
    <property type="pathway name" value="CREB1 phosphorylation through the activation of Adenylate Cyclase"/>
</dbReference>
<dbReference type="Reactome" id="R-DME-5610785">
    <property type="pathway name" value="GLI3 is processed to GLI3R by the proteasome"/>
</dbReference>
<dbReference type="Reactome" id="R-DME-5610787">
    <property type="pathway name" value="Hedgehog 'off' state"/>
</dbReference>
<dbReference type="Reactome" id="R-DME-5621575">
    <property type="pathway name" value="CD209 (DC-SIGN) signaling"/>
</dbReference>
<dbReference type="Reactome" id="R-DME-8963896">
    <property type="pathway name" value="HDL assembly"/>
</dbReference>
<dbReference type="Reactome" id="R-DME-9634597">
    <property type="pathway name" value="GPER1 signaling"/>
</dbReference>
<dbReference type="Reactome" id="R-DME-983231">
    <property type="pathway name" value="Factors involved in megakaryocyte development and platelet production"/>
</dbReference>
<dbReference type="Reactome" id="R-DME-9856530">
    <property type="pathway name" value="High laminar flow shear stress activates signaling by PIEZO1 and PECAM1:CDH5:KDR in endothelial cells"/>
</dbReference>
<dbReference type="BioGRID-ORCS" id="43644">
    <property type="hits" value="0 hits in 3 CRISPR screens"/>
</dbReference>
<dbReference type="GenomeRNAi" id="43644"/>
<dbReference type="PRO" id="PR:P16911"/>
<dbReference type="Proteomes" id="UP000000803">
    <property type="component" value="Chromosome 3R"/>
</dbReference>
<dbReference type="Bgee" id="FBgn0000274">
    <property type="expression patterns" value="Expressed in mid-late elongation-stage spermatid (Drosophila) in testis and 22 other cell types or tissues"/>
</dbReference>
<dbReference type="ExpressionAtlas" id="P16911">
    <property type="expression patterns" value="baseline and differential"/>
</dbReference>
<dbReference type="GO" id="GO:0005952">
    <property type="term" value="C:cAMP-dependent protein kinase complex"/>
    <property type="evidence" value="ECO:0000318"/>
    <property type="project" value="GO_Central"/>
</dbReference>
<dbReference type="GO" id="GO:0005829">
    <property type="term" value="C:cytosol"/>
    <property type="evidence" value="ECO:0000318"/>
    <property type="project" value="GO_Central"/>
</dbReference>
<dbReference type="GO" id="GO:0031588">
    <property type="term" value="C:nucleotide-activated protein kinase complex"/>
    <property type="evidence" value="ECO:0000250"/>
    <property type="project" value="FlyBase"/>
</dbReference>
<dbReference type="GO" id="GO:0005634">
    <property type="term" value="C:nucleus"/>
    <property type="evidence" value="ECO:0000318"/>
    <property type="project" value="GO_Central"/>
</dbReference>
<dbReference type="GO" id="GO:0005524">
    <property type="term" value="F:ATP binding"/>
    <property type="evidence" value="ECO:0007669"/>
    <property type="project" value="UniProtKB-KW"/>
</dbReference>
<dbReference type="GO" id="GO:0004691">
    <property type="term" value="F:cAMP-dependent protein kinase activity"/>
    <property type="evidence" value="ECO:0000250"/>
    <property type="project" value="FlyBase"/>
</dbReference>
<dbReference type="GO" id="GO:0034237">
    <property type="term" value="F:protein kinase A regulatory subunit binding"/>
    <property type="evidence" value="ECO:0000250"/>
    <property type="project" value="FlyBase"/>
</dbReference>
<dbReference type="GO" id="GO:0106310">
    <property type="term" value="F:protein serine kinase activity"/>
    <property type="evidence" value="ECO:0007669"/>
    <property type="project" value="RHEA"/>
</dbReference>
<dbReference type="GO" id="GO:0004674">
    <property type="term" value="F:protein serine/threonine kinase activity"/>
    <property type="evidence" value="ECO:0000250"/>
    <property type="project" value="FlyBase"/>
</dbReference>
<dbReference type="GO" id="GO:0007165">
    <property type="term" value="P:signal transduction"/>
    <property type="evidence" value="ECO:0000318"/>
    <property type="project" value="GO_Central"/>
</dbReference>
<dbReference type="FunFam" id="1.10.510.10:FF:000005">
    <property type="entry name" value="cAMP-dependent protein kinase catalytic subunit alpha"/>
    <property type="match status" value="1"/>
</dbReference>
<dbReference type="Gene3D" id="3.30.200.20">
    <property type="entry name" value="Phosphorylase Kinase, domain 1"/>
    <property type="match status" value="1"/>
</dbReference>
<dbReference type="Gene3D" id="1.10.510.10">
    <property type="entry name" value="Transferase(Phosphotransferase) domain 1"/>
    <property type="match status" value="1"/>
</dbReference>
<dbReference type="InterPro" id="IPR000961">
    <property type="entry name" value="AGC-kinase_C"/>
</dbReference>
<dbReference type="InterPro" id="IPR011009">
    <property type="entry name" value="Kinase-like_dom_sf"/>
</dbReference>
<dbReference type="InterPro" id="IPR000719">
    <property type="entry name" value="Prot_kinase_dom"/>
</dbReference>
<dbReference type="InterPro" id="IPR017441">
    <property type="entry name" value="Protein_kinase_ATP_BS"/>
</dbReference>
<dbReference type="InterPro" id="IPR008271">
    <property type="entry name" value="Ser/Thr_kinase_AS"/>
</dbReference>
<dbReference type="PANTHER" id="PTHR24353">
    <property type="entry name" value="CYCLIC NUCLEOTIDE-DEPENDENT PROTEIN KINASE"/>
    <property type="match status" value="1"/>
</dbReference>
<dbReference type="PANTHER" id="PTHR24353:SF152">
    <property type="entry name" value="UT01108P-RELATED"/>
    <property type="match status" value="1"/>
</dbReference>
<dbReference type="Pfam" id="PF00069">
    <property type="entry name" value="Pkinase"/>
    <property type="match status" value="1"/>
</dbReference>
<dbReference type="SMART" id="SM00133">
    <property type="entry name" value="S_TK_X"/>
    <property type="match status" value="1"/>
</dbReference>
<dbReference type="SMART" id="SM00220">
    <property type="entry name" value="S_TKc"/>
    <property type="match status" value="1"/>
</dbReference>
<dbReference type="SUPFAM" id="SSF56112">
    <property type="entry name" value="Protein kinase-like (PK-like)"/>
    <property type="match status" value="1"/>
</dbReference>
<dbReference type="PROSITE" id="PS51285">
    <property type="entry name" value="AGC_KINASE_CTER"/>
    <property type="match status" value="1"/>
</dbReference>
<dbReference type="PROSITE" id="PS00107">
    <property type="entry name" value="PROTEIN_KINASE_ATP"/>
    <property type="match status" value="1"/>
</dbReference>
<dbReference type="PROSITE" id="PS50011">
    <property type="entry name" value="PROTEIN_KINASE_DOM"/>
    <property type="match status" value="1"/>
</dbReference>
<dbReference type="PROSITE" id="PS00108">
    <property type="entry name" value="PROTEIN_KINASE_ST"/>
    <property type="match status" value="1"/>
</dbReference>
<evidence type="ECO:0000255" key="1">
    <source>
        <dbReference type="PROSITE-ProRule" id="PRU00159"/>
    </source>
</evidence>
<evidence type="ECO:0000255" key="2">
    <source>
        <dbReference type="PROSITE-ProRule" id="PRU00618"/>
    </source>
</evidence>
<evidence type="ECO:0000255" key="3">
    <source>
        <dbReference type="PROSITE-ProRule" id="PRU10027"/>
    </source>
</evidence>
<evidence type="ECO:0000303" key="4">
    <source>
    </source>
</evidence>
<evidence type="ECO:0000305" key="5"/>
<comment type="catalytic activity">
    <reaction>
        <text>L-seryl-[protein] + ATP = O-phospho-L-seryl-[protein] + ADP + H(+)</text>
        <dbReference type="Rhea" id="RHEA:17989"/>
        <dbReference type="Rhea" id="RHEA-COMP:9863"/>
        <dbReference type="Rhea" id="RHEA-COMP:11604"/>
        <dbReference type="ChEBI" id="CHEBI:15378"/>
        <dbReference type="ChEBI" id="CHEBI:29999"/>
        <dbReference type="ChEBI" id="CHEBI:30616"/>
        <dbReference type="ChEBI" id="CHEBI:83421"/>
        <dbReference type="ChEBI" id="CHEBI:456216"/>
        <dbReference type="EC" id="2.7.11.1"/>
    </reaction>
</comment>
<comment type="catalytic activity">
    <reaction>
        <text>L-threonyl-[protein] + ATP = O-phospho-L-threonyl-[protein] + ADP + H(+)</text>
        <dbReference type="Rhea" id="RHEA:46608"/>
        <dbReference type="Rhea" id="RHEA-COMP:11060"/>
        <dbReference type="Rhea" id="RHEA-COMP:11605"/>
        <dbReference type="ChEBI" id="CHEBI:15378"/>
        <dbReference type="ChEBI" id="CHEBI:30013"/>
        <dbReference type="ChEBI" id="CHEBI:30616"/>
        <dbReference type="ChEBI" id="CHEBI:61977"/>
        <dbReference type="ChEBI" id="CHEBI:456216"/>
        <dbReference type="EC" id="2.7.11.1"/>
    </reaction>
</comment>
<comment type="tissue specificity">
    <text>More abundant in adult body than adult head.</text>
</comment>
<comment type="developmental stage">
    <text>In embryos, pupae and adults.</text>
</comment>
<comment type="similarity">
    <text evidence="5">Belongs to the protein kinase superfamily. AGC Ser/Thr protein kinase family. cAMP subfamily.</text>
</comment>
<comment type="sequence caution" evidence="5">
    <conflict type="erroneous gene model prediction">
        <sequence resource="EMBL-CDS" id="CAA34834"/>
    </conflict>
</comment>
<reference key="1">
    <citation type="journal article" date="1988" name="Genes Dev.">
        <title>Isolation and characterization of Drosophila cAMP-dependent protein kinase genes.</title>
        <authorList>
            <person name="Kalderon D."/>
            <person name="Rubin G.M."/>
        </authorList>
    </citation>
    <scope>NUCLEOTIDE SEQUENCE [GENOMIC DNA]</scope>
    <source>
        <strain>Canton-S</strain>
    </source>
</reference>
<reference key="2">
    <citation type="journal article" date="2000" name="Science">
        <title>The genome sequence of Drosophila melanogaster.</title>
        <authorList>
            <person name="Adams M.D."/>
            <person name="Celniker S.E."/>
            <person name="Holt R.A."/>
            <person name="Evans C.A."/>
            <person name="Gocayne J.D."/>
            <person name="Amanatides P.G."/>
            <person name="Scherer S.E."/>
            <person name="Li P.W."/>
            <person name="Hoskins R.A."/>
            <person name="Galle R.F."/>
            <person name="George R.A."/>
            <person name="Lewis S.E."/>
            <person name="Richards S."/>
            <person name="Ashburner M."/>
            <person name="Henderson S.N."/>
            <person name="Sutton G.G."/>
            <person name="Wortman J.R."/>
            <person name="Yandell M.D."/>
            <person name="Zhang Q."/>
            <person name="Chen L.X."/>
            <person name="Brandon R.C."/>
            <person name="Rogers Y.-H.C."/>
            <person name="Blazej R.G."/>
            <person name="Champe M."/>
            <person name="Pfeiffer B.D."/>
            <person name="Wan K.H."/>
            <person name="Doyle C."/>
            <person name="Baxter E.G."/>
            <person name="Helt G."/>
            <person name="Nelson C.R."/>
            <person name="Miklos G.L.G."/>
            <person name="Abril J.F."/>
            <person name="Agbayani A."/>
            <person name="An H.-J."/>
            <person name="Andrews-Pfannkoch C."/>
            <person name="Baldwin D."/>
            <person name="Ballew R.M."/>
            <person name="Basu A."/>
            <person name="Baxendale J."/>
            <person name="Bayraktaroglu L."/>
            <person name="Beasley E.M."/>
            <person name="Beeson K.Y."/>
            <person name="Benos P.V."/>
            <person name="Berman B.P."/>
            <person name="Bhandari D."/>
            <person name="Bolshakov S."/>
            <person name="Borkova D."/>
            <person name="Botchan M.R."/>
            <person name="Bouck J."/>
            <person name="Brokstein P."/>
            <person name="Brottier P."/>
            <person name="Burtis K.C."/>
            <person name="Busam D.A."/>
            <person name="Butler H."/>
            <person name="Cadieu E."/>
            <person name="Center A."/>
            <person name="Chandra I."/>
            <person name="Cherry J.M."/>
            <person name="Cawley S."/>
            <person name="Dahlke C."/>
            <person name="Davenport L.B."/>
            <person name="Davies P."/>
            <person name="de Pablos B."/>
            <person name="Delcher A."/>
            <person name="Deng Z."/>
            <person name="Mays A.D."/>
            <person name="Dew I."/>
            <person name="Dietz S.M."/>
            <person name="Dodson K."/>
            <person name="Doup L.E."/>
            <person name="Downes M."/>
            <person name="Dugan-Rocha S."/>
            <person name="Dunkov B.C."/>
            <person name="Dunn P."/>
            <person name="Durbin K.J."/>
            <person name="Evangelista C.C."/>
            <person name="Ferraz C."/>
            <person name="Ferriera S."/>
            <person name="Fleischmann W."/>
            <person name="Fosler C."/>
            <person name="Gabrielian A.E."/>
            <person name="Garg N.S."/>
            <person name="Gelbart W.M."/>
            <person name="Glasser K."/>
            <person name="Glodek A."/>
            <person name="Gong F."/>
            <person name="Gorrell J.H."/>
            <person name="Gu Z."/>
            <person name="Guan P."/>
            <person name="Harris M."/>
            <person name="Harris N.L."/>
            <person name="Harvey D.A."/>
            <person name="Heiman T.J."/>
            <person name="Hernandez J.R."/>
            <person name="Houck J."/>
            <person name="Hostin D."/>
            <person name="Houston K.A."/>
            <person name="Howland T.J."/>
            <person name="Wei M.-H."/>
            <person name="Ibegwam C."/>
            <person name="Jalali M."/>
            <person name="Kalush F."/>
            <person name="Karpen G.H."/>
            <person name="Ke Z."/>
            <person name="Kennison J.A."/>
            <person name="Ketchum K.A."/>
            <person name="Kimmel B.E."/>
            <person name="Kodira C.D."/>
            <person name="Kraft C.L."/>
            <person name="Kravitz S."/>
            <person name="Kulp D."/>
            <person name="Lai Z."/>
            <person name="Lasko P."/>
            <person name="Lei Y."/>
            <person name="Levitsky A.A."/>
            <person name="Li J.H."/>
            <person name="Li Z."/>
            <person name="Liang Y."/>
            <person name="Lin X."/>
            <person name="Liu X."/>
            <person name="Mattei B."/>
            <person name="McIntosh T.C."/>
            <person name="McLeod M.P."/>
            <person name="McPherson D."/>
            <person name="Merkulov G."/>
            <person name="Milshina N.V."/>
            <person name="Mobarry C."/>
            <person name="Morris J."/>
            <person name="Moshrefi A."/>
            <person name="Mount S.M."/>
            <person name="Moy M."/>
            <person name="Murphy B."/>
            <person name="Murphy L."/>
            <person name="Muzny D.M."/>
            <person name="Nelson D.L."/>
            <person name="Nelson D.R."/>
            <person name="Nelson K.A."/>
            <person name="Nixon K."/>
            <person name="Nusskern D.R."/>
            <person name="Pacleb J.M."/>
            <person name="Palazzolo M."/>
            <person name="Pittman G.S."/>
            <person name="Pan S."/>
            <person name="Pollard J."/>
            <person name="Puri V."/>
            <person name="Reese M.G."/>
            <person name="Reinert K."/>
            <person name="Remington K."/>
            <person name="Saunders R.D.C."/>
            <person name="Scheeler F."/>
            <person name="Shen H."/>
            <person name="Shue B.C."/>
            <person name="Siden-Kiamos I."/>
            <person name="Simpson M."/>
            <person name="Skupski M.P."/>
            <person name="Smith T.J."/>
            <person name="Spier E."/>
            <person name="Spradling A.C."/>
            <person name="Stapleton M."/>
            <person name="Strong R."/>
            <person name="Sun E."/>
            <person name="Svirskas R."/>
            <person name="Tector C."/>
            <person name="Turner R."/>
            <person name="Venter E."/>
            <person name="Wang A.H."/>
            <person name="Wang X."/>
            <person name="Wang Z.-Y."/>
            <person name="Wassarman D.A."/>
            <person name="Weinstock G.M."/>
            <person name="Weissenbach J."/>
            <person name="Williams S.M."/>
            <person name="Woodage T."/>
            <person name="Worley K.C."/>
            <person name="Wu D."/>
            <person name="Yang S."/>
            <person name="Yao Q.A."/>
            <person name="Ye J."/>
            <person name="Yeh R.-F."/>
            <person name="Zaveri J.S."/>
            <person name="Zhan M."/>
            <person name="Zhang G."/>
            <person name="Zhao Q."/>
            <person name="Zheng L."/>
            <person name="Zheng X.H."/>
            <person name="Zhong F.N."/>
            <person name="Zhong W."/>
            <person name="Zhou X."/>
            <person name="Zhu S.C."/>
            <person name="Zhu X."/>
            <person name="Smith H.O."/>
            <person name="Gibbs R.A."/>
            <person name="Myers E.W."/>
            <person name="Rubin G.M."/>
            <person name="Venter J.C."/>
        </authorList>
    </citation>
    <scope>NUCLEOTIDE SEQUENCE [LARGE SCALE GENOMIC DNA]</scope>
    <source>
        <strain>Berkeley</strain>
    </source>
</reference>
<reference key="3">
    <citation type="journal article" date="2002" name="Genome Biol.">
        <title>Annotation of the Drosophila melanogaster euchromatic genome: a systematic review.</title>
        <authorList>
            <person name="Misra S."/>
            <person name="Crosby M.A."/>
            <person name="Mungall C.J."/>
            <person name="Matthews B.B."/>
            <person name="Campbell K.S."/>
            <person name="Hradecky P."/>
            <person name="Huang Y."/>
            <person name="Kaminker J.S."/>
            <person name="Millburn G.H."/>
            <person name="Prochnik S.E."/>
            <person name="Smith C.D."/>
            <person name="Tupy J.L."/>
            <person name="Whitfield E.J."/>
            <person name="Bayraktaroglu L."/>
            <person name="Berman B.P."/>
            <person name="Bettencourt B.R."/>
            <person name="Celniker S.E."/>
            <person name="de Grey A.D.N.J."/>
            <person name="Drysdale R.A."/>
            <person name="Harris N.L."/>
            <person name="Richter J."/>
            <person name="Russo S."/>
            <person name="Schroeder A.J."/>
            <person name="Shu S.Q."/>
            <person name="Stapleton M."/>
            <person name="Yamada C."/>
            <person name="Ashburner M."/>
            <person name="Gelbart W.M."/>
            <person name="Rubin G.M."/>
            <person name="Lewis S.E."/>
        </authorList>
    </citation>
    <scope>GENOME REANNOTATION</scope>
    <source>
        <strain>Berkeley</strain>
    </source>
</reference>
<reference key="4">
    <citation type="submission" date="2004-03" db="EMBL/GenBank/DDBJ databases">
        <authorList>
            <person name="Stapleton M."/>
            <person name="Carlson J."/>
            <person name="Chavez C."/>
            <person name="Frise E."/>
            <person name="George R."/>
            <person name="Pacleb J."/>
            <person name="Park S."/>
            <person name="Wan K."/>
            <person name="Yu C."/>
            <person name="Rubin G.M."/>
            <person name="Celniker S."/>
        </authorList>
    </citation>
    <scope>NUCLEOTIDE SEQUENCE [LARGE SCALE MRNA]</scope>
    <source>
        <strain>Berkeley</strain>
        <tissue>Testis</tissue>
    </source>
</reference>
<protein>
    <recommendedName>
        <fullName evidence="5">cAMP-dependent protein kinase catalytic subunit 2</fullName>
        <ecNumber>2.7.11.1</ecNumber>
    </recommendedName>
    <alternativeName>
        <fullName evidence="4">Protein kinase DC1</fullName>
    </alternativeName>
</protein>
<sequence length="354" mass="41468">MSQHTSQYVFNSKEDYNVILDNMSREFEERWNHQTQSPYTNLENYITRAVLGNGSFGTVMLVREKSGKNYYAAKMMSKEDLVRLKQVAHVHNEKHVLNAARFPFLIYLVDSTKCFDYLYLILPLVNGGELFSYHRRVRKFNEKHARFYAAQVALALEYMHKMHLMYRDLKPENILLDQRGYIKITDFGFTKRVDGRTSTLCGTPEYLAPEIVQLRPYNKSVDWWAFGILVYEFVAGRSPFAIHNRDVILMYSKICICDYKMPSYFTSQLRSLVESLMQVDTSKRLGNSNDGSSDVKSHPWFQGVDWFGILNQEVTAPYQPTISGAEDLSNFENFEFKDRYKSRINRHPELFANF</sequence>